<organism>
    <name type="scientific">Yersinia pestis (strain Pestoides F)</name>
    <dbReference type="NCBI Taxonomy" id="386656"/>
    <lineage>
        <taxon>Bacteria</taxon>
        <taxon>Pseudomonadati</taxon>
        <taxon>Pseudomonadota</taxon>
        <taxon>Gammaproteobacteria</taxon>
        <taxon>Enterobacterales</taxon>
        <taxon>Yersiniaceae</taxon>
        <taxon>Yersinia</taxon>
    </lineage>
</organism>
<name>MLTF_YERPP</name>
<reference key="1">
    <citation type="submission" date="2007-02" db="EMBL/GenBank/DDBJ databases">
        <title>Complete sequence of chromosome of Yersinia pestis Pestoides F.</title>
        <authorList>
            <consortium name="US DOE Joint Genome Institute"/>
            <person name="Copeland A."/>
            <person name="Lucas S."/>
            <person name="Lapidus A."/>
            <person name="Barry K."/>
            <person name="Detter J.C."/>
            <person name="Glavina del Rio T."/>
            <person name="Hammon N."/>
            <person name="Israni S."/>
            <person name="Dalin E."/>
            <person name="Tice H."/>
            <person name="Pitluck S."/>
            <person name="Di Bartolo G."/>
            <person name="Chain P."/>
            <person name="Malfatti S."/>
            <person name="Shin M."/>
            <person name="Vergez L."/>
            <person name="Schmutz J."/>
            <person name="Larimer F."/>
            <person name="Land M."/>
            <person name="Hauser L."/>
            <person name="Worsham P."/>
            <person name="Chu M."/>
            <person name="Bearden S."/>
            <person name="Garcia E."/>
            <person name="Richardson P."/>
        </authorList>
    </citation>
    <scope>NUCLEOTIDE SEQUENCE [LARGE SCALE GENOMIC DNA]</scope>
    <source>
        <strain>Pestoides F</strain>
    </source>
</reference>
<evidence type="ECO:0000255" key="1">
    <source>
        <dbReference type="HAMAP-Rule" id="MF_02016"/>
    </source>
</evidence>
<evidence type="ECO:0000305" key="2"/>
<comment type="function">
    <text evidence="1">Murein-degrading enzyme that degrades murein glycan strands and insoluble, high-molecular weight murein sacculi, with the concomitant formation of a 1,6-anhydromuramoyl product. Lytic transglycosylases (LTs) play an integral role in the metabolism of the peptidoglycan (PG) sacculus. Their lytic action creates space within the PG sacculus to allow for its expansion as well as for the insertion of various structures such as secretion systems and flagella.</text>
</comment>
<comment type="catalytic activity">
    <reaction evidence="1">
        <text>Exolytic cleavage of the (1-&gt;4)-beta-glycosidic linkage between N-acetylmuramic acid (MurNAc) and N-acetylglucosamine (GlcNAc) residues in peptidoglycan, from either the reducing or the non-reducing ends of the peptidoglycan chains, with concomitant formation of a 1,6-anhydrobond in the MurNAc residue.</text>
        <dbReference type="EC" id="4.2.2.n1"/>
    </reaction>
</comment>
<comment type="subcellular location">
    <subcellularLocation>
        <location>Cell outer membrane</location>
        <topology>Peripheral membrane protein</topology>
    </subcellularLocation>
    <text evidence="1">Attached to the inner leaflet of the outer membrane.</text>
</comment>
<comment type="domain">
    <text evidence="1">The N-terminal domain does not have lytic activity and probably modulates enzymatic activity. The C-terminal domain is the catalytic active domain.</text>
</comment>
<comment type="similarity">
    <text evidence="1">In the N-terminal section; belongs to the bacterial solute-binding protein 3 family.</text>
</comment>
<comment type="similarity">
    <text evidence="1">In the C-terminal section; belongs to the transglycosylase Slt family.</text>
</comment>
<comment type="sequence caution" evidence="2">
    <conflict type="erroneous initiation">
        <sequence resource="EMBL-CDS" id="ABP40640"/>
    </conflict>
</comment>
<proteinExistence type="inferred from homology"/>
<dbReference type="EC" id="4.2.2.n1" evidence="1"/>
<dbReference type="EMBL" id="CP000668">
    <property type="protein sequence ID" value="ABP40640.1"/>
    <property type="status" value="ALT_INIT"/>
    <property type="molecule type" value="Genomic_DNA"/>
</dbReference>
<dbReference type="RefSeq" id="WP_002211562.1">
    <property type="nucleotide sequence ID" value="NZ_CP009715.1"/>
</dbReference>
<dbReference type="SMR" id="A4TMX8"/>
<dbReference type="CAZy" id="GH23">
    <property type="family name" value="Glycoside Hydrolase Family 23"/>
</dbReference>
<dbReference type="GeneID" id="57975876"/>
<dbReference type="KEGG" id="ypp:YPDSF_2265"/>
<dbReference type="PATRIC" id="fig|386656.14.peg.3757"/>
<dbReference type="GO" id="GO:0009279">
    <property type="term" value="C:cell outer membrane"/>
    <property type="evidence" value="ECO:0007669"/>
    <property type="project" value="UniProtKB-SubCell"/>
</dbReference>
<dbReference type="GO" id="GO:0008933">
    <property type="term" value="F:peptidoglycan lytic transglycosylase activity"/>
    <property type="evidence" value="ECO:0007669"/>
    <property type="project" value="UniProtKB-UniRule"/>
</dbReference>
<dbReference type="GO" id="GO:0016998">
    <property type="term" value="P:cell wall macromolecule catabolic process"/>
    <property type="evidence" value="ECO:0007669"/>
    <property type="project" value="UniProtKB-UniRule"/>
</dbReference>
<dbReference type="GO" id="GO:0071555">
    <property type="term" value="P:cell wall organization"/>
    <property type="evidence" value="ECO:0007669"/>
    <property type="project" value="UniProtKB-KW"/>
</dbReference>
<dbReference type="GO" id="GO:0009253">
    <property type="term" value="P:peptidoglycan catabolic process"/>
    <property type="evidence" value="ECO:0007669"/>
    <property type="project" value="TreeGrafter"/>
</dbReference>
<dbReference type="CDD" id="cd13403">
    <property type="entry name" value="MLTF-like"/>
    <property type="match status" value="1"/>
</dbReference>
<dbReference type="CDD" id="cd01009">
    <property type="entry name" value="PBP2_YfhD_N"/>
    <property type="match status" value="1"/>
</dbReference>
<dbReference type="FunFam" id="1.10.530.10:FF:000003">
    <property type="entry name" value="Membrane-bound lytic murein transglycosylase F"/>
    <property type="match status" value="1"/>
</dbReference>
<dbReference type="Gene3D" id="1.10.530.10">
    <property type="match status" value="1"/>
</dbReference>
<dbReference type="Gene3D" id="3.40.190.10">
    <property type="entry name" value="Periplasmic binding protein-like II"/>
    <property type="match status" value="2"/>
</dbReference>
<dbReference type="HAMAP" id="MF_02016">
    <property type="entry name" value="MltF"/>
    <property type="match status" value="1"/>
</dbReference>
<dbReference type="InterPro" id="IPR023346">
    <property type="entry name" value="Lysozyme-like_dom_sf"/>
</dbReference>
<dbReference type="InterPro" id="IPR023703">
    <property type="entry name" value="MltF"/>
</dbReference>
<dbReference type="InterPro" id="IPR001638">
    <property type="entry name" value="Solute-binding_3/MltF_N"/>
</dbReference>
<dbReference type="InterPro" id="IPR000189">
    <property type="entry name" value="Transglyc_AS"/>
</dbReference>
<dbReference type="InterPro" id="IPR008258">
    <property type="entry name" value="Transglycosylase_SLT_dom_1"/>
</dbReference>
<dbReference type="NCBIfam" id="NF008112">
    <property type="entry name" value="PRK10859.1"/>
    <property type="match status" value="1"/>
</dbReference>
<dbReference type="PANTHER" id="PTHR35936">
    <property type="entry name" value="MEMBRANE-BOUND LYTIC MUREIN TRANSGLYCOSYLASE F"/>
    <property type="match status" value="1"/>
</dbReference>
<dbReference type="PANTHER" id="PTHR35936:SF32">
    <property type="entry name" value="MEMBRANE-BOUND LYTIC MUREIN TRANSGLYCOSYLASE F"/>
    <property type="match status" value="1"/>
</dbReference>
<dbReference type="Pfam" id="PF00497">
    <property type="entry name" value="SBP_bac_3"/>
    <property type="match status" value="1"/>
</dbReference>
<dbReference type="Pfam" id="PF01464">
    <property type="entry name" value="SLT"/>
    <property type="match status" value="1"/>
</dbReference>
<dbReference type="SMART" id="SM00062">
    <property type="entry name" value="PBPb"/>
    <property type="match status" value="1"/>
</dbReference>
<dbReference type="SUPFAM" id="SSF53955">
    <property type="entry name" value="Lysozyme-like"/>
    <property type="match status" value="1"/>
</dbReference>
<dbReference type="SUPFAM" id="SSF53850">
    <property type="entry name" value="Periplasmic binding protein-like II"/>
    <property type="match status" value="1"/>
</dbReference>
<dbReference type="PROSITE" id="PS00922">
    <property type="entry name" value="TRANSGLYCOSYLASE"/>
    <property type="match status" value="1"/>
</dbReference>
<keyword id="KW-0998">Cell outer membrane</keyword>
<keyword id="KW-0961">Cell wall biogenesis/degradation</keyword>
<keyword id="KW-0456">Lyase</keyword>
<keyword id="KW-0472">Membrane</keyword>
<keyword id="KW-0732">Signal</keyword>
<protein>
    <recommendedName>
        <fullName evidence="1">Membrane-bound lytic murein transglycosylase F</fullName>
        <ecNumber evidence="1">4.2.2.n1</ecNumber>
    </recommendedName>
    <alternativeName>
        <fullName evidence="1">Murein lyase F</fullName>
    </alternativeName>
</protein>
<gene>
    <name evidence="1" type="primary">mltF</name>
    <name type="ordered locus">YPDSF_2265</name>
</gene>
<sequence>MTRIKLSYFTIGLVALLLALALWPNIPWRNGQEGQLDQIKARGELRVSTISSPLIYSTEKDTPSGFDYELAKRFADYLGVKLVIIPHHNIDDLFDALDNDDTDLLAAGLIYNRERLNRARTGPAYYSVSQQLVYRLGSPRPKSFSDLKGQVVVASGSAHMTTLKRLKQTKYPELNWSSSVDKSGKELLEQVAEGKLDYTLGDSATIALLQRIHPQLAVAFDVTDEEPVTWYFKQSDDDSLYAAMLDFYSEMVEDGSLARLEEKYLGHVGSFDYVDTKTFLSAIDNVLPSYQHLFEKHAGDIDWKLLAVIAYQESHWNPQATSPTGVRGLMMLTRATADGLGVKDRVDPEESIRGGAIYLQRLMKKLPETIPEDERIWFALAAYNLGYGHMLDARRLTKNQNGNPDSWVDVKMRLPMLSQKRYYPSTTYGYARGHEAYNYVENIRRYQVSLVGYLQEKEKKAAQHAAIEAELGKSNPVVGPGWSIGD</sequence>
<feature type="signal peptide" evidence="1">
    <location>
        <begin position="1"/>
        <end position="21"/>
    </location>
</feature>
<feature type="chain" id="PRO_0000354002" description="Membrane-bound lytic murein transglycosylase F">
    <location>
        <begin position="22"/>
        <end position="486"/>
    </location>
</feature>
<feature type="region of interest" description="Non-LT domain" evidence="1">
    <location>
        <begin position="22"/>
        <end position="268"/>
    </location>
</feature>
<feature type="region of interest" description="LT domain" evidence="1">
    <location>
        <begin position="269"/>
        <end position="486"/>
    </location>
</feature>
<feature type="active site" evidence="1">
    <location>
        <position position="313"/>
    </location>
</feature>
<accession>A4TMX8</accession>